<accession>A7H540</accession>
<comment type="function">
    <text evidence="1">Catalyzes the reversible formation of acyl-phosphate (acyl-PO(4)) from acyl-[acyl-carrier-protein] (acyl-ACP). This enzyme utilizes acyl-ACP as fatty acyl donor, but not acyl-CoA.</text>
</comment>
<comment type="catalytic activity">
    <reaction evidence="1">
        <text>a fatty acyl-[ACP] + phosphate = an acyl phosphate + holo-[ACP]</text>
        <dbReference type="Rhea" id="RHEA:42292"/>
        <dbReference type="Rhea" id="RHEA-COMP:9685"/>
        <dbReference type="Rhea" id="RHEA-COMP:14125"/>
        <dbReference type="ChEBI" id="CHEBI:43474"/>
        <dbReference type="ChEBI" id="CHEBI:59918"/>
        <dbReference type="ChEBI" id="CHEBI:64479"/>
        <dbReference type="ChEBI" id="CHEBI:138651"/>
        <dbReference type="EC" id="2.3.1.274"/>
    </reaction>
</comment>
<comment type="pathway">
    <text evidence="1">Lipid metabolism; phospholipid metabolism.</text>
</comment>
<comment type="subunit">
    <text evidence="1">Homodimer. Probably interacts with PlsY.</text>
</comment>
<comment type="subcellular location">
    <subcellularLocation>
        <location evidence="1">Cytoplasm</location>
    </subcellularLocation>
    <text evidence="1">Associated with the membrane possibly through PlsY.</text>
</comment>
<comment type="similarity">
    <text evidence="1">Belongs to the PlsX family.</text>
</comment>
<gene>
    <name evidence="1" type="primary">plsX</name>
    <name type="ordered locus">JJD26997_1629</name>
</gene>
<proteinExistence type="inferred from homology"/>
<evidence type="ECO:0000255" key="1">
    <source>
        <dbReference type="HAMAP-Rule" id="MF_00019"/>
    </source>
</evidence>
<dbReference type="EC" id="2.3.1.274" evidence="1"/>
<dbReference type="EMBL" id="CP000768">
    <property type="protein sequence ID" value="ABS43671.1"/>
    <property type="molecule type" value="Genomic_DNA"/>
</dbReference>
<dbReference type="SMR" id="A7H540"/>
<dbReference type="KEGG" id="cjd:JJD26997_1629"/>
<dbReference type="HOGENOM" id="CLU_039379_1_1_7"/>
<dbReference type="UniPathway" id="UPA00085"/>
<dbReference type="Proteomes" id="UP000002302">
    <property type="component" value="Chromosome"/>
</dbReference>
<dbReference type="GO" id="GO:0005737">
    <property type="term" value="C:cytoplasm"/>
    <property type="evidence" value="ECO:0007669"/>
    <property type="project" value="UniProtKB-SubCell"/>
</dbReference>
<dbReference type="GO" id="GO:0043811">
    <property type="term" value="F:phosphate:acyl-[acyl carrier protein] acyltransferase activity"/>
    <property type="evidence" value="ECO:0007669"/>
    <property type="project" value="UniProtKB-UniRule"/>
</dbReference>
<dbReference type="GO" id="GO:0006633">
    <property type="term" value="P:fatty acid biosynthetic process"/>
    <property type="evidence" value="ECO:0007669"/>
    <property type="project" value="UniProtKB-UniRule"/>
</dbReference>
<dbReference type="GO" id="GO:0008654">
    <property type="term" value="P:phospholipid biosynthetic process"/>
    <property type="evidence" value="ECO:0007669"/>
    <property type="project" value="UniProtKB-KW"/>
</dbReference>
<dbReference type="Gene3D" id="3.40.718.10">
    <property type="entry name" value="Isopropylmalate Dehydrogenase"/>
    <property type="match status" value="1"/>
</dbReference>
<dbReference type="HAMAP" id="MF_00019">
    <property type="entry name" value="PlsX"/>
    <property type="match status" value="1"/>
</dbReference>
<dbReference type="InterPro" id="IPR003664">
    <property type="entry name" value="FA_synthesis"/>
</dbReference>
<dbReference type="InterPro" id="IPR012281">
    <property type="entry name" value="Phospholipid_synth_PlsX-like"/>
</dbReference>
<dbReference type="NCBIfam" id="TIGR00182">
    <property type="entry name" value="plsX"/>
    <property type="match status" value="1"/>
</dbReference>
<dbReference type="PANTHER" id="PTHR30100">
    <property type="entry name" value="FATTY ACID/PHOSPHOLIPID SYNTHESIS PROTEIN PLSX"/>
    <property type="match status" value="1"/>
</dbReference>
<dbReference type="PANTHER" id="PTHR30100:SF1">
    <property type="entry name" value="PHOSPHATE ACYLTRANSFERASE"/>
    <property type="match status" value="1"/>
</dbReference>
<dbReference type="Pfam" id="PF02504">
    <property type="entry name" value="FA_synthesis"/>
    <property type="match status" value="1"/>
</dbReference>
<dbReference type="PIRSF" id="PIRSF002465">
    <property type="entry name" value="Phsphlp_syn_PlsX"/>
    <property type="match status" value="1"/>
</dbReference>
<dbReference type="SUPFAM" id="SSF53659">
    <property type="entry name" value="Isocitrate/Isopropylmalate dehydrogenase-like"/>
    <property type="match status" value="1"/>
</dbReference>
<feature type="chain" id="PRO_1000001743" description="Phosphate acyltransferase">
    <location>
        <begin position="1"/>
        <end position="328"/>
    </location>
</feature>
<reference key="1">
    <citation type="submission" date="2007-07" db="EMBL/GenBank/DDBJ databases">
        <title>Complete genome sequence of Campylobacter jejuni subsp doylei 269.97 isolated from human blood.</title>
        <authorList>
            <person name="Fouts D.E."/>
            <person name="Mongodin E.F."/>
            <person name="Puiu D."/>
            <person name="Sebastian Y."/>
            <person name="Miller W.G."/>
            <person name="Mandrell R.E."/>
            <person name="Lastovica A.J."/>
            <person name="Nelson K.E."/>
        </authorList>
    </citation>
    <scope>NUCLEOTIDE SEQUENCE [LARGE SCALE GENOMIC DNA]</scope>
    <source>
        <strain>ATCC BAA-1458 / RM4099 / 269.97</strain>
    </source>
</reference>
<name>PLSX_CAMJD</name>
<keyword id="KW-0963">Cytoplasm</keyword>
<keyword id="KW-0444">Lipid biosynthesis</keyword>
<keyword id="KW-0443">Lipid metabolism</keyword>
<keyword id="KW-0594">Phospholipid biosynthesis</keyword>
<keyword id="KW-1208">Phospholipid metabolism</keyword>
<keyword id="KW-0808">Transferase</keyword>
<sequence length="328" mass="35918">MINIAIDAMGGDFGEKPIIEGVLKALEAKPFNAILVGNSKILKPLIPKKLEQYIQYEEANEIFSMNENATDALKNKETTIYKAINLLKEKKVDAVVSAGHSGASMSLATLRLGRLKGISRPAIATLMPNIVSKTLLLDVGANTDCKAENLFQFAIMGEVYAREIMQIQKPRLALLSNGEEECKGNELTKESHQLMKKIPNFIGNAEGRDIFNGEIDVLVCDGFDGNVILKACEGVATAIFQLLKNEVKRSFISKIGALLIKPSFKKLKKHTDWQEYGGAPLLGVNGCVIISHGKSDSRAIKNAIFQAVNFSQSHINELIENELGKYNA</sequence>
<organism>
    <name type="scientific">Campylobacter jejuni subsp. doylei (strain ATCC BAA-1458 / RM4099 / 269.97)</name>
    <dbReference type="NCBI Taxonomy" id="360109"/>
    <lineage>
        <taxon>Bacteria</taxon>
        <taxon>Pseudomonadati</taxon>
        <taxon>Campylobacterota</taxon>
        <taxon>Epsilonproteobacteria</taxon>
        <taxon>Campylobacterales</taxon>
        <taxon>Campylobacteraceae</taxon>
        <taxon>Campylobacter</taxon>
    </lineage>
</organism>
<protein>
    <recommendedName>
        <fullName evidence="1">Phosphate acyltransferase</fullName>
        <ecNumber evidence="1">2.3.1.274</ecNumber>
    </recommendedName>
    <alternativeName>
        <fullName evidence="1">Acyl-ACP phosphotransacylase</fullName>
    </alternativeName>
    <alternativeName>
        <fullName evidence="1">Acyl-[acyl-carrier-protein]--phosphate acyltransferase</fullName>
    </alternativeName>
    <alternativeName>
        <fullName evidence="1">Phosphate-acyl-ACP acyltransferase</fullName>
    </alternativeName>
</protein>